<reference key="1">
    <citation type="submission" date="2001-08" db="EMBL/GenBank/DDBJ databases">
        <title>Genomic Sequence For Oryza sativa Clone 10P20, Lemont Strain, Complete Sequence.</title>
        <authorList>
            <person name="Huang E.N."/>
            <person name="de la Bastide M."/>
            <person name="Vil D.M."/>
            <person name="Preston R.R."/>
            <person name="Spiegel L.A."/>
            <person name="See L.H."/>
            <person name="Shah R."/>
            <person name="Matero A."/>
            <person name="O'Shaughnessy A."/>
            <person name="Rodriguez M."/>
            <person name="Shekher M."/>
            <person name="Swaby I."/>
            <person name="Schutz K."/>
            <person name="Habermann K."/>
            <person name="Parnell L.D."/>
            <person name="Nascimento L.U."/>
            <person name="Dedhia N.N."/>
            <person name="McCombie W.R."/>
        </authorList>
    </citation>
    <scope>NUCLEOTIDE SEQUENCE [GENOMIC DNA]</scope>
    <source>
        <strain>cv. Lemont</strain>
    </source>
</reference>
<reference key="2">
    <citation type="submission" date="2003-07" db="EMBL/GenBank/DDBJ databases">
        <title>Rice cul-1 is required for cell cycle.</title>
        <authorList>
            <person name="Yao Q."/>
            <person name="Peng R."/>
            <person name="Xiong A."/>
        </authorList>
    </citation>
    <scope>NUCLEOTIDE SEQUENCE [MRNA] (ISOFORM 2)</scope>
</reference>
<reference key="3">
    <citation type="journal article" date="2002" name="Nature">
        <title>The genome sequence and structure of rice chromosome 1.</title>
        <authorList>
            <person name="Sasaki T."/>
            <person name="Matsumoto T."/>
            <person name="Yamamoto K."/>
            <person name="Sakata K."/>
            <person name="Baba T."/>
            <person name="Katayose Y."/>
            <person name="Wu J."/>
            <person name="Niimura Y."/>
            <person name="Cheng Z."/>
            <person name="Nagamura Y."/>
            <person name="Antonio B.A."/>
            <person name="Kanamori H."/>
            <person name="Hosokawa S."/>
            <person name="Masukawa M."/>
            <person name="Arikawa K."/>
            <person name="Chiden Y."/>
            <person name="Hayashi M."/>
            <person name="Okamoto M."/>
            <person name="Ando T."/>
            <person name="Aoki H."/>
            <person name="Arita K."/>
            <person name="Hamada M."/>
            <person name="Harada C."/>
            <person name="Hijishita S."/>
            <person name="Honda M."/>
            <person name="Ichikawa Y."/>
            <person name="Idonuma A."/>
            <person name="Iijima M."/>
            <person name="Ikeda M."/>
            <person name="Ikeno M."/>
            <person name="Ito S."/>
            <person name="Ito T."/>
            <person name="Ito Y."/>
            <person name="Ito Y."/>
            <person name="Iwabuchi A."/>
            <person name="Kamiya K."/>
            <person name="Karasawa W."/>
            <person name="Katagiri S."/>
            <person name="Kikuta A."/>
            <person name="Kobayashi N."/>
            <person name="Kono I."/>
            <person name="Machita K."/>
            <person name="Maehara T."/>
            <person name="Mizuno H."/>
            <person name="Mizubayashi T."/>
            <person name="Mukai Y."/>
            <person name="Nagasaki H."/>
            <person name="Nakashima M."/>
            <person name="Nakama Y."/>
            <person name="Nakamichi Y."/>
            <person name="Nakamura M."/>
            <person name="Namiki N."/>
            <person name="Negishi M."/>
            <person name="Ohta I."/>
            <person name="Ono N."/>
            <person name="Saji S."/>
            <person name="Sakai K."/>
            <person name="Shibata M."/>
            <person name="Shimokawa T."/>
            <person name="Shomura A."/>
            <person name="Song J."/>
            <person name="Takazaki Y."/>
            <person name="Terasawa K."/>
            <person name="Tsuji K."/>
            <person name="Waki K."/>
            <person name="Yamagata H."/>
            <person name="Yamane H."/>
            <person name="Yoshiki S."/>
            <person name="Yoshihara R."/>
            <person name="Yukawa K."/>
            <person name="Zhong H."/>
            <person name="Iwama H."/>
            <person name="Endo T."/>
            <person name="Ito H."/>
            <person name="Hahn J.H."/>
            <person name="Kim H.-I."/>
            <person name="Eun M.-Y."/>
            <person name="Yano M."/>
            <person name="Jiang J."/>
            <person name="Gojobori T."/>
        </authorList>
    </citation>
    <scope>NUCLEOTIDE SEQUENCE [LARGE SCALE GENOMIC DNA]</scope>
    <source>
        <strain>cv. Nipponbare</strain>
    </source>
</reference>
<reference key="4">
    <citation type="journal article" date="2005" name="Nature">
        <title>The map-based sequence of the rice genome.</title>
        <authorList>
            <consortium name="International rice genome sequencing project (IRGSP)"/>
        </authorList>
    </citation>
    <scope>NUCLEOTIDE SEQUENCE [LARGE SCALE GENOMIC DNA]</scope>
    <source>
        <strain>cv. Nipponbare</strain>
    </source>
</reference>
<reference key="5">
    <citation type="journal article" date="2008" name="Nucleic Acids Res.">
        <title>The rice annotation project database (RAP-DB): 2008 update.</title>
        <authorList>
            <consortium name="The rice annotation project (RAP)"/>
        </authorList>
    </citation>
    <scope>GENOME REANNOTATION</scope>
    <source>
        <strain>cv. Nipponbare</strain>
    </source>
</reference>
<reference key="6">
    <citation type="journal article" date="2013" name="Rice">
        <title>Improvement of the Oryza sativa Nipponbare reference genome using next generation sequence and optical map data.</title>
        <authorList>
            <person name="Kawahara Y."/>
            <person name="de la Bastide M."/>
            <person name="Hamilton J.P."/>
            <person name="Kanamori H."/>
            <person name="McCombie W.R."/>
            <person name="Ouyang S."/>
            <person name="Schwartz D.C."/>
            <person name="Tanaka T."/>
            <person name="Wu J."/>
            <person name="Zhou S."/>
            <person name="Childs K.L."/>
            <person name="Davidson R.M."/>
            <person name="Lin H."/>
            <person name="Quesada-Ocampo L."/>
            <person name="Vaillancourt B."/>
            <person name="Sakai H."/>
            <person name="Lee S.S."/>
            <person name="Kim J."/>
            <person name="Numa H."/>
            <person name="Itoh T."/>
            <person name="Buell C.R."/>
            <person name="Matsumoto T."/>
        </authorList>
    </citation>
    <scope>GENOME REANNOTATION</scope>
    <source>
        <strain>cv. Nipponbare</strain>
    </source>
</reference>
<reference key="7">
    <citation type="journal article" date="2005" name="PLoS Biol.">
        <title>The genomes of Oryza sativa: a history of duplications.</title>
        <authorList>
            <person name="Yu J."/>
            <person name="Wang J."/>
            <person name="Lin W."/>
            <person name="Li S."/>
            <person name="Li H."/>
            <person name="Zhou J."/>
            <person name="Ni P."/>
            <person name="Dong W."/>
            <person name="Hu S."/>
            <person name="Zeng C."/>
            <person name="Zhang J."/>
            <person name="Zhang Y."/>
            <person name="Li R."/>
            <person name="Xu Z."/>
            <person name="Li S."/>
            <person name="Li X."/>
            <person name="Zheng H."/>
            <person name="Cong L."/>
            <person name="Lin L."/>
            <person name="Yin J."/>
            <person name="Geng J."/>
            <person name="Li G."/>
            <person name="Shi J."/>
            <person name="Liu J."/>
            <person name="Lv H."/>
            <person name="Li J."/>
            <person name="Wang J."/>
            <person name="Deng Y."/>
            <person name="Ran L."/>
            <person name="Shi X."/>
            <person name="Wang X."/>
            <person name="Wu Q."/>
            <person name="Li C."/>
            <person name="Ren X."/>
            <person name="Wang J."/>
            <person name="Wang X."/>
            <person name="Li D."/>
            <person name="Liu D."/>
            <person name="Zhang X."/>
            <person name="Ji Z."/>
            <person name="Zhao W."/>
            <person name="Sun Y."/>
            <person name="Zhang Z."/>
            <person name="Bao J."/>
            <person name="Han Y."/>
            <person name="Dong L."/>
            <person name="Ji J."/>
            <person name="Chen P."/>
            <person name="Wu S."/>
            <person name="Liu J."/>
            <person name="Xiao Y."/>
            <person name="Bu D."/>
            <person name="Tan J."/>
            <person name="Yang L."/>
            <person name="Ye C."/>
            <person name="Zhang J."/>
            <person name="Xu J."/>
            <person name="Zhou Y."/>
            <person name="Yu Y."/>
            <person name="Zhang B."/>
            <person name="Zhuang S."/>
            <person name="Wei H."/>
            <person name="Liu B."/>
            <person name="Lei M."/>
            <person name="Yu H."/>
            <person name="Li Y."/>
            <person name="Xu H."/>
            <person name="Wei S."/>
            <person name="He X."/>
            <person name="Fang L."/>
            <person name="Zhang Z."/>
            <person name="Zhang Y."/>
            <person name="Huang X."/>
            <person name="Su Z."/>
            <person name="Tong W."/>
            <person name="Li J."/>
            <person name="Tong Z."/>
            <person name="Li S."/>
            <person name="Ye J."/>
            <person name="Wang L."/>
            <person name="Fang L."/>
            <person name="Lei T."/>
            <person name="Chen C.-S."/>
            <person name="Chen H.-C."/>
            <person name="Xu Z."/>
            <person name="Li H."/>
            <person name="Huang H."/>
            <person name="Zhang F."/>
            <person name="Xu H."/>
            <person name="Li N."/>
            <person name="Zhao C."/>
            <person name="Li S."/>
            <person name="Dong L."/>
            <person name="Huang Y."/>
            <person name="Li L."/>
            <person name="Xi Y."/>
            <person name="Qi Q."/>
            <person name="Li W."/>
            <person name="Zhang B."/>
            <person name="Hu W."/>
            <person name="Zhang Y."/>
            <person name="Tian X."/>
            <person name="Jiao Y."/>
            <person name="Liang X."/>
            <person name="Jin J."/>
            <person name="Gao L."/>
            <person name="Zheng W."/>
            <person name="Hao B."/>
            <person name="Liu S.-M."/>
            <person name="Wang W."/>
            <person name="Yuan L."/>
            <person name="Cao M."/>
            <person name="McDermott J."/>
            <person name="Samudrala R."/>
            <person name="Wang J."/>
            <person name="Wong G.K.-S."/>
            <person name="Yang H."/>
        </authorList>
    </citation>
    <scope>NUCLEOTIDE SEQUENCE [LARGE SCALE GENOMIC DNA]</scope>
    <source>
        <strain>cv. Nipponbare</strain>
    </source>
</reference>
<reference key="8">
    <citation type="journal article" date="2003" name="Science">
        <title>Collection, mapping, and annotation of over 28,000 cDNA clones from japonica rice.</title>
        <authorList>
            <consortium name="The rice full-length cDNA consortium"/>
        </authorList>
    </citation>
    <scope>NUCLEOTIDE SEQUENCE [LARGE SCALE MRNA] (ISOFORM 1)</scope>
    <source>
        <strain>cv. Nipponbare</strain>
    </source>
</reference>
<reference key="9">
    <citation type="journal article" date="2014" name="Plant Cell Physiol.">
        <title>DWARF3 participates in an SCF complex and associates with DWARF14 to suppress rice shoot branching.</title>
        <authorList>
            <person name="Zhao J."/>
            <person name="Wang T."/>
            <person name="Wang M."/>
            <person name="Liu Y."/>
            <person name="Yuan S."/>
            <person name="Gao Y."/>
            <person name="Yin L."/>
            <person name="Sun W."/>
            <person name="Peng L."/>
            <person name="Zhang W."/>
            <person name="Wan J."/>
            <person name="Li X."/>
        </authorList>
    </citation>
    <scope>INTERACTION WITH D3</scope>
</reference>
<reference key="10">
    <citation type="journal article" date="2016" name="Sci. Rep.">
        <title>CSN6, a subunit of the COP9 signalosome, is involved in early response to iron deficiency in Oryza sativa.</title>
        <authorList>
            <person name="Tan S."/>
            <person name="Liu F."/>
            <person name="Pan X.X."/>
            <person name="Zang Y.P."/>
            <person name="Jin F."/>
            <person name="Zu W.X."/>
            <person name="Qi X.T."/>
            <person name="Xiao W."/>
            <person name="Yin L.P."/>
        </authorList>
    </citation>
    <scope>NEDDYLATION</scope>
</reference>
<reference key="11">
    <citation type="journal article" date="2017" name="PLoS ONE">
        <title>Rice black streaked dwarf virus P7-2 forms a SCF complex through binding to Oryza sativa SKP1-like proteins, and interacts with GID2 involved in the gibberellin pathway.</title>
        <authorList>
            <person name="Tao T."/>
            <person name="Zhou C.J."/>
            <person name="Wang Q."/>
            <person name="Chen X.R."/>
            <person name="Sun Q."/>
            <person name="Zhao T.Y."/>
            <person name="Ye J.C."/>
            <person name="Wang Y."/>
            <person name="Zhang Z.Y."/>
            <person name="Zhang Y.L."/>
            <person name="Guo Z.J."/>
            <person name="Wang X.B."/>
            <person name="Li D.W."/>
            <person name="Yu J.L."/>
            <person name="Han C.G."/>
        </authorList>
    </citation>
    <scope>IDENTIFICATION IN THE SCF COMPLEX</scope>
</reference>
<reference key="12">
    <citation type="journal article" date="2018" name="Genes Genomics">
        <title>Characterization and comparative expression analysis of CUL1 genes in rice.</title>
        <authorList>
            <person name="Kim S.H."/>
            <person name="Woo O.G."/>
            <person name="Jang H."/>
            <person name="Lee J.H."/>
        </authorList>
    </citation>
    <scope>TISSUE SPECIFICITY</scope>
    <scope>INDUCTION</scope>
</reference>
<comment type="function">
    <text evidence="1">Involved in ubiquitination and subsequent proteasomal degradation of target proteins.</text>
</comment>
<comment type="subunit">
    <text evidence="4 6">Part of a SCF (SKP1-CUL1-F-box protein) E3 ubiquitin-protein ligase complex (PubMed:28494021). Is able to form the SCF complex together with SKP1 and the rice black streaked dwarf virus RBSDV protein P7-2 (PubMed:28494021). Interacts with D3 (PubMed:24616269).</text>
</comment>
<comment type="alternative products">
    <event type="alternative splicing"/>
    <isoform>
        <id>Q5ZC88-1</id>
        <name>1</name>
        <sequence type="displayed"/>
    </isoform>
    <isoform>
        <id>Q5ZC88-2</id>
        <name>2</name>
        <sequence type="described" ref="VSP_060100"/>
    </isoform>
</comment>
<comment type="tissue specificity">
    <text evidence="7">Expressed in dry seeds and coleoptiles.</text>
</comment>
<comment type="induction">
    <text evidence="7">Induced by abscisic acid, heat shock, salt stress and drought stress.</text>
</comment>
<comment type="PTM">
    <text evidence="5">Neddylated (rubylated) (PubMed:27137867). Deneddylation occurs upon interaction with the COP9 signalosome (CSN) complex (PubMed:27137867).</text>
</comment>
<comment type="similarity">
    <text evidence="3">Belongs to the cullin family.</text>
</comment>
<comment type="sequence caution" evidence="10">
    <conflict type="erroneous gene model prediction">
        <sequence resource="EMBL-CDS" id="AAK53839"/>
    </conflict>
</comment>
<proteinExistence type="evidence at protein level"/>
<protein>
    <recommendedName>
        <fullName evidence="10">Cullin-1</fullName>
        <shortName evidence="8">OsCUL1</shortName>
    </recommendedName>
    <alternativeName>
        <fullName evidence="9">OsCUL1-1</fullName>
    </alternativeName>
</protein>
<sequence length="744" mass="86948">MATHERKTIDLEQGWEFMQKGITKLKNILEGKPEPQFSSEDYMMLYTTIYNMCTQKPPHDYSQQLYEKYRESFEEYITSMVLPSLREKHDEFMLRELVKRWSNHKVMVRWLSRFFHYLDRYFISRRSLPQLSEVGLSCFRDLVYQEIKGKVKSAVISLIDQEREGEQIDRALLKNVLDIFVEIGLTSMDYYENDFEDFLLKDTADYYSIKAQTWILEDSCPDYMLKAEECLKREKERVAHYLHSSSEQKLLEKVQHELLTQYASQLLEKEHSGCHALLRDDKVDDLSRMYRLFSRITRGLEPVSQIFKQHVTNEGTALVKQAEDAASNKKPEKKEIVGLQEQVFVRKIIELHDKYVAYVTDCFQGHTLFHKALKEAFEVFCNKGVSGSSSAELLATFCDNILKKGGSEKLSDEAIEDTLEKVVRLLAYISDKDLFAEFYRKKLARRLLFDKSANDEHERSILTKLKQQCGGQFTSKMEGMVTDLTVARDHQAKFEEFISTHSELNPGIALAVTVLTTGFWPSYKSFDINLPAEMVKCVEVFKEFYQTRTKHRKLTWIYSLGTCNINAKFEAKTIELIVTTYQAALLLLFNGVDRLSYSEIVTQLNLSDDDVVRLLHSLSCAKYKILSKEPNNRSISPNDVFEFNSKFTDKLRRLKIPLPPVDEKKKVVEDVDKDRRYAIDASIVRIMKSRKVLGHQQLVMECVEQLGRMFKPDFKAIKKRIEDLITRDYLERDKDNPNVYRYLA</sequence>
<name>CUL1_ORYSJ</name>
<gene>
    <name evidence="8" type="primary">CUL1</name>
    <name evidence="9" type="synonym">CUL1-1</name>
    <name evidence="14" type="ordered locus">Os01g0369000</name>
    <name evidence="10" type="ordered locus">LOC_Os01g27150</name>
    <name evidence="15" type="ORF">OsJ_01786</name>
    <name evidence="11" type="ORF">OSJNBa0010P20.16</name>
    <name evidence="13" type="ORF">P0043B10.31</name>
    <name evidence="12" type="ORF">P0560B06.30</name>
</gene>
<keyword id="KW-0025">Alternative splicing</keyword>
<keyword id="KW-1185">Reference proteome</keyword>
<keyword id="KW-0832">Ubl conjugation</keyword>
<keyword id="KW-0833">Ubl conjugation pathway</keyword>
<feature type="chain" id="PRO_0000446886" description="Cullin-1">
    <location>
        <begin position="1"/>
        <end position="744"/>
    </location>
</feature>
<feature type="domain" description="Cullin neddylation" evidence="2">
    <location>
        <begin position="674"/>
        <end position="736"/>
    </location>
</feature>
<feature type="splice variant" id="VSP_060100" description="In isoform 2.">
    <location>
        <begin position="331"/>
        <end position="342"/>
    </location>
</feature>
<dbReference type="EMBL" id="AC011806">
    <property type="protein sequence ID" value="AAK53839.1"/>
    <property type="status" value="ALT_SEQ"/>
    <property type="molecule type" value="Genomic_DNA"/>
</dbReference>
<dbReference type="EMBL" id="AY336990">
    <property type="protein sequence ID" value="AAQ01196.1"/>
    <property type="molecule type" value="mRNA"/>
</dbReference>
<dbReference type="EMBL" id="AP003236">
    <property type="protein sequence ID" value="BAD61452.1"/>
    <property type="molecule type" value="Genomic_DNA"/>
</dbReference>
<dbReference type="EMBL" id="AP003281">
    <property type="protein sequence ID" value="BAB64762.1"/>
    <property type="molecule type" value="Genomic_DNA"/>
</dbReference>
<dbReference type="EMBL" id="AP008207">
    <property type="protein sequence ID" value="BAF04962.1"/>
    <property type="molecule type" value="Genomic_DNA"/>
</dbReference>
<dbReference type="EMBL" id="AP014957">
    <property type="protein sequence ID" value="BAS72159.1"/>
    <property type="molecule type" value="Genomic_DNA"/>
</dbReference>
<dbReference type="EMBL" id="CM000138">
    <property type="protein sequence ID" value="EEE54581.1"/>
    <property type="molecule type" value="Genomic_DNA"/>
</dbReference>
<dbReference type="EMBL" id="AK064940">
    <property type="protein sequence ID" value="BAG89287.1"/>
    <property type="molecule type" value="mRNA"/>
</dbReference>
<dbReference type="EMBL" id="AK104340">
    <property type="protein sequence ID" value="BAG96607.1"/>
    <property type="molecule type" value="mRNA"/>
</dbReference>
<dbReference type="RefSeq" id="XP_015619069.1">
    <molecule id="Q5ZC88-1"/>
    <property type="nucleotide sequence ID" value="XM_015763583.1"/>
</dbReference>
<dbReference type="SMR" id="Q5ZC88"/>
<dbReference type="FunCoup" id="Q5ZC88">
    <property type="interactions" value="1222"/>
</dbReference>
<dbReference type="STRING" id="39947.Q5ZC88"/>
<dbReference type="PaxDb" id="39947-Q5ZC88"/>
<dbReference type="EnsemblPlants" id="Os01t0369000-01">
    <molecule id="Q5ZC88-1"/>
    <property type="protein sequence ID" value="Os01t0369000-01"/>
    <property type="gene ID" value="Os01g0369000"/>
</dbReference>
<dbReference type="EnsemblPlants" id="Os01t0369000-02">
    <molecule id="Q5ZC88-1"/>
    <property type="protein sequence ID" value="Os01t0369000-02"/>
    <property type="gene ID" value="Os01g0369000"/>
</dbReference>
<dbReference type="GeneID" id="4325735"/>
<dbReference type="Gramene" id="Os01t0369000-01">
    <molecule id="Q5ZC88-1"/>
    <property type="protein sequence ID" value="Os01t0369000-01"/>
    <property type="gene ID" value="Os01g0369000"/>
</dbReference>
<dbReference type="Gramene" id="Os01t0369000-02">
    <molecule id="Q5ZC88-1"/>
    <property type="protein sequence ID" value="Os01t0369000-02"/>
    <property type="gene ID" value="Os01g0369000"/>
</dbReference>
<dbReference type="KEGG" id="dosa:Os01g0369000"/>
<dbReference type="KEGG" id="osa:4325735"/>
<dbReference type="eggNOG" id="KOG2166">
    <property type="taxonomic scope" value="Eukaryota"/>
</dbReference>
<dbReference type="HOGENOM" id="CLU_004747_3_0_1"/>
<dbReference type="InParanoid" id="Q5ZC88"/>
<dbReference type="OMA" id="IREWDRY"/>
<dbReference type="OrthoDB" id="27073at2759"/>
<dbReference type="Proteomes" id="UP000000763">
    <property type="component" value="Chromosome 1"/>
</dbReference>
<dbReference type="Proteomes" id="UP000007752">
    <property type="component" value="Chromosome 1"/>
</dbReference>
<dbReference type="Proteomes" id="UP000059680">
    <property type="component" value="Chromosome 1"/>
</dbReference>
<dbReference type="GO" id="GO:0031461">
    <property type="term" value="C:cullin-RING ubiquitin ligase complex"/>
    <property type="evidence" value="ECO:0000318"/>
    <property type="project" value="GO_Central"/>
</dbReference>
<dbReference type="GO" id="GO:0031625">
    <property type="term" value="F:ubiquitin protein ligase binding"/>
    <property type="evidence" value="ECO:0000318"/>
    <property type="project" value="GO_Central"/>
</dbReference>
<dbReference type="GO" id="GO:0016567">
    <property type="term" value="P:protein ubiquitination"/>
    <property type="evidence" value="ECO:0000318"/>
    <property type="project" value="GO_Central"/>
</dbReference>
<dbReference type="GO" id="GO:0006511">
    <property type="term" value="P:ubiquitin-dependent protein catabolic process"/>
    <property type="evidence" value="ECO:0007669"/>
    <property type="project" value="InterPro"/>
</dbReference>
<dbReference type="FunFam" id="1.10.10.10:FF:000503">
    <property type="entry name" value="Cullin-1"/>
    <property type="match status" value="1"/>
</dbReference>
<dbReference type="FunFam" id="1.20.1310.10:FF:000013">
    <property type="entry name" value="Cullin-1 like"/>
    <property type="match status" value="1"/>
</dbReference>
<dbReference type="FunFam" id="3.30.230.130:FF:000005">
    <property type="entry name" value="Cullin-1 like"/>
    <property type="match status" value="1"/>
</dbReference>
<dbReference type="FunFam" id="1.20.1310.10:FF:000020">
    <property type="entry name" value="Cullin-1, putative"/>
    <property type="match status" value="1"/>
</dbReference>
<dbReference type="FunFam" id="1.20.1310.10:FF:000021">
    <property type="entry name" value="Cullin-1, putative"/>
    <property type="match status" value="1"/>
</dbReference>
<dbReference type="FunFam" id="1.20.1310.10:FF:000025">
    <property type="entry name" value="Cullin-1, putative"/>
    <property type="match status" value="1"/>
</dbReference>
<dbReference type="Gene3D" id="1.20.1310.10">
    <property type="entry name" value="Cullin Repeats"/>
    <property type="match status" value="4"/>
</dbReference>
<dbReference type="Gene3D" id="3.30.230.130">
    <property type="entry name" value="Cullin, Chain C, Domain 2"/>
    <property type="match status" value="1"/>
</dbReference>
<dbReference type="Gene3D" id="1.10.10.10">
    <property type="entry name" value="Winged helix-like DNA-binding domain superfamily/Winged helix DNA-binding domain"/>
    <property type="match status" value="1"/>
</dbReference>
<dbReference type="InterPro" id="IPR045093">
    <property type="entry name" value="Cullin"/>
</dbReference>
<dbReference type="InterPro" id="IPR016157">
    <property type="entry name" value="Cullin_CS"/>
</dbReference>
<dbReference type="InterPro" id="IPR016158">
    <property type="entry name" value="Cullin_homology"/>
</dbReference>
<dbReference type="InterPro" id="IPR036317">
    <property type="entry name" value="Cullin_homology_sf"/>
</dbReference>
<dbReference type="InterPro" id="IPR001373">
    <property type="entry name" value="Cullin_N"/>
</dbReference>
<dbReference type="InterPro" id="IPR019559">
    <property type="entry name" value="Cullin_neddylation_domain"/>
</dbReference>
<dbReference type="InterPro" id="IPR016159">
    <property type="entry name" value="Cullin_repeat-like_dom_sf"/>
</dbReference>
<dbReference type="InterPro" id="IPR036388">
    <property type="entry name" value="WH-like_DNA-bd_sf"/>
</dbReference>
<dbReference type="InterPro" id="IPR036390">
    <property type="entry name" value="WH_DNA-bd_sf"/>
</dbReference>
<dbReference type="PANTHER" id="PTHR11932">
    <property type="entry name" value="CULLIN"/>
    <property type="match status" value="1"/>
</dbReference>
<dbReference type="Pfam" id="PF00888">
    <property type="entry name" value="Cullin"/>
    <property type="match status" value="1"/>
</dbReference>
<dbReference type="Pfam" id="PF10557">
    <property type="entry name" value="Cullin_Nedd8"/>
    <property type="match status" value="1"/>
</dbReference>
<dbReference type="SMART" id="SM00182">
    <property type="entry name" value="CULLIN"/>
    <property type="match status" value="1"/>
</dbReference>
<dbReference type="SMART" id="SM00884">
    <property type="entry name" value="Cullin_Nedd8"/>
    <property type="match status" value="1"/>
</dbReference>
<dbReference type="SUPFAM" id="SSF75632">
    <property type="entry name" value="Cullin homology domain"/>
    <property type="match status" value="1"/>
</dbReference>
<dbReference type="SUPFAM" id="SSF74788">
    <property type="entry name" value="Cullin repeat-like"/>
    <property type="match status" value="1"/>
</dbReference>
<dbReference type="SUPFAM" id="SSF46785">
    <property type="entry name" value="Winged helix' DNA-binding domain"/>
    <property type="match status" value="1"/>
</dbReference>
<dbReference type="PROSITE" id="PS01256">
    <property type="entry name" value="CULLIN_1"/>
    <property type="match status" value="1"/>
</dbReference>
<dbReference type="PROSITE" id="PS50069">
    <property type="entry name" value="CULLIN_2"/>
    <property type="match status" value="1"/>
</dbReference>
<organism>
    <name type="scientific">Oryza sativa subsp. japonica</name>
    <name type="common">Rice</name>
    <dbReference type="NCBI Taxonomy" id="39947"/>
    <lineage>
        <taxon>Eukaryota</taxon>
        <taxon>Viridiplantae</taxon>
        <taxon>Streptophyta</taxon>
        <taxon>Embryophyta</taxon>
        <taxon>Tracheophyta</taxon>
        <taxon>Spermatophyta</taxon>
        <taxon>Magnoliopsida</taxon>
        <taxon>Liliopsida</taxon>
        <taxon>Poales</taxon>
        <taxon>Poaceae</taxon>
        <taxon>BOP clade</taxon>
        <taxon>Oryzoideae</taxon>
        <taxon>Oryzeae</taxon>
        <taxon>Oryzinae</taxon>
        <taxon>Oryza</taxon>
        <taxon>Oryza sativa</taxon>
    </lineage>
</organism>
<accession>Q5ZC88</accession>
<accession>Q7XB92</accession>
<accession>Q93VH7</accession>
<accession>Q94I77</accession>
<evidence type="ECO:0000250" key="1">
    <source>
        <dbReference type="UniProtKB" id="Q94AH6"/>
    </source>
</evidence>
<evidence type="ECO:0000255" key="2"/>
<evidence type="ECO:0000255" key="3">
    <source>
        <dbReference type="PROSITE-ProRule" id="PRU00330"/>
    </source>
</evidence>
<evidence type="ECO:0000269" key="4">
    <source>
    </source>
</evidence>
<evidence type="ECO:0000269" key="5">
    <source>
    </source>
</evidence>
<evidence type="ECO:0000269" key="6">
    <source>
    </source>
</evidence>
<evidence type="ECO:0000269" key="7">
    <source>
    </source>
</evidence>
<evidence type="ECO:0000303" key="8">
    <source>
    </source>
</evidence>
<evidence type="ECO:0000303" key="9">
    <source>
    </source>
</evidence>
<evidence type="ECO:0000305" key="10"/>
<evidence type="ECO:0000312" key="11">
    <source>
        <dbReference type="EMBL" id="AAK53839.1"/>
    </source>
</evidence>
<evidence type="ECO:0000312" key="12">
    <source>
        <dbReference type="EMBL" id="BAB64762.1"/>
    </source>
</evidence>
<evidence type="ECO:0000312" key="13">
    <source>
        <dbReference type="EMBL" id="BAD61452.1"/>
    </source>
</evidence>
<evidence type="ECO:0000312" key="14">
    <source>
        <dbReference type="EMBL" id="BAF04962.1"/>
    </source>
</evidence>
<evidence type="ECO:0000312" key="15">
    <source>
        <dbReference type="EMBL" id="EEE54581.1"/>
    </source>
</evidence>